<comment type="function">
    <text evidence="1 5">Oxidoreductase; part of the gene cluster that mediates the biosynthesis of oxaleimides, cytotoxic compounds containing an unusual disubstituted succinimide moiety (PubMed:28365998). The first step of the pathway is provided by the HR-PKS poxF that serves in a new mode of collaborative biosynthesis with the PKS-NRPS poxE, by providing the olefin containing amino acid substrate via the synthesis of an ACP-bound dec-4-enoate (PubMed:28365998). The cytochrome P450 monooxygenase poxM-catalyzed oxidation at the alpha-position creates the enzyme-bound 2-hydroxydec-4-enoyl-ACP thioester, which may be prone to spontaneous hydrolysis to yield 2-hydroxydec-4-enoic acid due to increased electrophilicity of the carbonyl (PubMed:28365998). 2-hydroxydec-4-enoic acid can then be further oxidized by poxM to yield the alpha-ketoacid 2-oxodec-4-enoicacid, which is reductively aminated by the aminotransferase poxL to yield (S,E)-2-aminodec-4-enoic acid (PubMed:28365998). The Hybrid PKS-NRPS synthetase poxE then performs condensation between the octaketide product of its PKS modules and the amino group of (S,E)-2-aminodec-4-enoic acid which is activated and incorporated by the adenylation domain (PubMed:28365998). The resulting aminoacyl product can be cyclized by the Diels-Alderase PoxQ and reductively released by the reductive (R) domain of poxE to yield an aldehyde intermediate (Probable) (PubMed:28365998). The released aldehyde is then substrate for a Knoevenagel condensation by the hydrolyase poxO followed by an oxidation at the 5-position of the pyrrolidone ring (PubMed:28365998). The presence of the olefin from the amino acid building block allows for migration of the substituted allyl group to occur (PubMed:28365998). This allylic transposition reaction takes place in a conjugate addition, semipinacol-like fashion to yield a succinimide intermediate (PubMed:28365998). Iterative two-electron oxidations of the C7 methyl of the succinimide intermediate to the carboxylic acid can be catalyzed by one of two remaining cytochrome P450 monooxygenasess poxC or poxD to yield oxaleimide A (PubMed:28365998). Subsequent oxidation yields the maleimide scaffold oxaleimide I (PubMed:28365998). Both oxaleimide A and oxaleimide I can undergo oxidative modifications in the decalin ring to yield the series of products oxaleimides B to H (PubMed:28365998).</text>
</comment>
<comment type="pathway">
    <text evidence="4">Secondary metabolite biosynthesis.</text>
</comment>
<comment type="induction">
    <text evidence="1">Expression is positively regulated by the oxaleimides biosynthesis cluster-specific transcription factor poxB.</text>
</comment>
<comment type="similarity">
    <text evidence="3">Belongs to the NmrA-type oxidoreductase family. Isoflavone reductase subfamily.</text>
</comment>
<proteinExistence type="evidence at transcript level"/>
<organism>
    <name type="scientific">Penicillium oxalicum</name>
    <dbReference type="NCBI Taxonomy" id="69781"/>
    <lineage>
        <taxon>Eukaryota</taxon>
        <taxon>Fungi</taxon>
        <taxon>Dikarya</taxon>
        <taxon>Ascomycota</taxon>
        <taxon>Pezizomycotina</taxon>
        <taxon>Eurotiomycetes</taxon>
        <taxon>Eurotiomycetidae</taxon>
        <taxon>Eurotiales</taxon>
        <taxon>Aspergillaceae</taxon>
        <taxon>Penicillium</taxon>
    </lineage>
</organism>
<feature type="chain" id="PRO_0000453771" description="Oxidoreductase poxI">
    <location>
        <begin position="1"/>
        <end position="314"/>
    </location>
</feature>
<accession>A0A1W5T323</accession>
<evidence type="ECO:0000269" key="1">
    <source>
    </source>
</evidence>
<evidence type="ECO:0000303" key="2">
    <source>
    </source>
</evidence>
<evidence type="ECO:0000305" key="3"/>
<evidence type="ECO:0000305" key="4">
    <source>
    </source>
</evidence>
<evidence type="ECO:0000305" key="5">
    <source>
    </source>
</evidence>
<keyword id="KW-0521">NADP</keyword>
<keyword id="KW-0560">Oxidoreductase</keyword>
<sequence>MSTVYYPSVILKKSPLPLKLTPARASGNFGTPITAALQRASFNITIITRTESSSTFPAGLPIIRTSYTLENLTTALAGQDAAICVVGPGGIGAQVLMIEAAEAAGVKRFIVDDFGWGPGFRNLPEFRAIHAHRRAGWELAKAKAQANPNFTFTGITSGNPIDWAMKRFPLMGFDIARCSAIIYDSGTEKFTATTLAGIGQSVVGVLQHPDETANRFVKVLSIITNQNELLEAFQRVTGRQWPVQRASAQTLIESGQQKFQAGMGGWVLELVVAQMYDEGEARCVMAPSWEASDSPLLGVKKESADEVVAKVLQL</sequence>
<protein>
    <recommendedName>
        <fullName evidence="2">Oxidoreductase poxI</fullName>
        <ecNumber evidence="4">1.3.1.-</ecNumber>
    </recommendedName>
    <alternativeName>
        <fullName evidence="2">Oxaleimides biosynthesis cluster protein I</fullName>
    </alternativeName>
</protein>
<gene>
    <name evidence="2" type="primary">poxI</name>
</gene>
<name>POXI_PENOX</name>
<dbReference type="EC" id="1.3.1.-" evidence="4"/>
<dbReference type="EMBL" id="KY764298">
    <property type="protein sequence ID" value="ARF05983.1"/>
    <property type="molecule type" value="Genomic_DNA"/>
</dbReference>
<dbReference type="SMR" id="A0A1W5T323"/>
<dbReference type="GO" id="GO:0016491">
    <property type="term" value="F:oxidoreductase activity"/>
    <property type="evidence" value="ECO:0007669"/>
    <property type="project" value="UniProtKB-KW"/>
</dbReference>
<dbReference type="CDD" id="cd05259">
    <property type="entry name" value="PCBER_SDR_a"/>
    <property type="match status" value="1"/>
</dbReference>
<dbReference type="Gene3D" id="3.40.50.720">
    <property type="entry name" value="NAD(P)-binding Rossmann-like Domain"/>
    <property type="match status" value="1"/>
</dbReference>
<dbReference type="Gene3D" id="3.90.25.10">
    <property type="entry name" value="UDP-galactose 4-epimerase, domain 1"/>
    <property type="match status" value="1"/>
</dbReference>
<dbReference type="InterPro" id="IPR016040">
    <property type="entry name" value="NAD(P)-bd_dom"/>
</dbReference>
<dbReference type="InterPro" id="IPR036291">
    <property type="entry name" value="NAD(P)-bd_dom_sf"/>
</dbReference>
<dbReference type="InterPro" id="IPR051609">
    <property type="entry name" value="NmrA/Isoflavone_reductase-like"/>
</dbReference>
<dbReference type="InterPro" id="IPR045312">
    <property type="entry name" value="PCBER-like"/>
</dbReference>
<dbReference type="PANTHER" id="PTHR47706:SF9">
    <property type="entry name" value="NMRA-LIKE DOMAIN-CONTAINING PROTEIN-RELATED"/>
    <property type="match status" value="1"/>
</dbReference>
<dbReference type="PANTHER" id="PTHR47706">
    <property type="entry name" value="NMRA-LIKE FAMILY PROTEIN"/>
    <property type="match status" value="1"/>
</dbReference>
<dbReference type="Pfam" id="PF13460">
    <property type="entry name" value="NAD_binding_10"/>
    <property type="match status" value="1"/>
</dbReference>
<dbReference type="SUPFAM" id="SSF51735">
    <property type="entry name" value="NAD(P)-binding Rossmann-fold domains"/>
    <property type="match status" value="1"/>
</dbReference>
<reference key="1">
    <citation type="journal article" date="2017" name="J. Am. Chem. Soc.">
        <title>Collaborative Biosynthesis of Maleimide- and Succinimide-Containing Natural Products by Fungal Polyketide Megasynthases.</title>
        <authorList>
            <person name="Sato M."/>
            <person name="Dander J.E."/>
            <person name="Sato C."/>
            <person name="Hung Y.S."/>
            <person name="Gao S.S."/>
            <person name="Tang M.C."/>
            <person name="Hang L."/>
            <person name="Winter J.M."/>
            <person name="Garg N.K."/>
            <person name="Watanabe K."/>
            <person name="Tang Y."/>
        </authorList>
    </citation>
    <scope>NUCLEOTIDE SEQUENCE [GENOMIC DNA]</scope>
    <scope>FUNCTION</scope>
    <scope>INDUCTION</scope>
    <scope>PATHWAY</scope>
    <source>
        <strain>K85</strain>
    </source>
</reference>
<reference key="2">
    <citation type="journal article" date="2020" name="Chem. Commun. (Camb.)">
        <title>Evidence for enzyme catalysed intramolecular [4+2] Diels-Alder cyclization during the biosynthesis of pyrichalasin H.</title>
        <authorList>
            <person name="Hantke V."/>
            <person name="Skellam E.J."/>
            <person name="Cox R.J."/>
        </authorList>
    </citation>
    <scope>FUNCTION</scope>
</reference>